<organism>
    <name type="scientific">Bovine papillomavirus type 1</name>
    <dbReference type="NCBI Taxonomy" id="337052"/>
    <lineage>
        <taxon>Viruses</taxon>
        <taxon>Monodnaviria</taxon>
        <taxon>Shotokuvirae</taxon>
        <taxon>Cossaviricota</taxon>
        <taxon>Papovaviricetes</taxon>
        <taxon>Zurhausenvirales</taxon>
        <taxon>Papillomaviridae</taxon>
        <taxon>Firstpapillomavirinae</taxon>
        <taxon>Deltapapillomavirus</taxon>
    </lineage>
</organism>
<accession>P0DOD6</accession>
<evidence type="ECO:0000250" key="1">
    <source>
        <dbReference type="UniProtKB" id="P0DKA0"/>
    </source>
</evidence>
<evidence type="ECO:0000256" key="2">
    <source>
        <dbReference type="SAM" id="MobiDB-lite"/>
    </source>
</evidence>
<evidence type="ECO:0000305" key="3"/>
<reference key="1">
    <citation type="journal article" date="1982" name="Nature">
        <title>The primary structure and genetic organization of the bovine papillomavirus type 1 genome.</title>
        <authorList>
            <person name="Chen E.Y."/>
            <person name="Howley P.M."/>
            <person name="Levinson A.D."/>
            <person name="Seeburg P.H."/>
        </authorList>
    </citation>
    <scope>NUCLEOTIDE SEQUENCE [GENOMIC DNA]</scope>
</reference>
<sequence length="215" mass="23290">MKLTVFLRPSRDRPDGVWVASEGPEGDPAGKEAEPAQPVSSLLGSPACGPIRAGLGWVRDGPRSHPYNFPAGSGGSILRSSSTPVQGTVPVDLASRQEEEEQSPDSTEEEPVTLPRRTTNDGFHLLKAGGSCFALISGTANQVKCYRFRVKKNHRHRYENCTTTWFTVADNGAERQGQAQILITFGSPSQRQDFLKHVPLPPGMNISGFTASLDF</sequence>
<feature type="chain" id="PRO_0000438761" description="Protein E8^E2C">
    <location>
        <begin position="1"/>
        <end position="215"/>
    </location>
</feature>
<feature type="region of interest" description="Disordered" evidence="2">
    <location>
        <begin position="1"/>
        <end position="45"/>
    </location>
</feature>
<feature type="region of interest" description="Disordered" evidence="2">
    <location>
        <begin position="68"/>
        <end position="87"/>
    </location>
</feature>
<feature type="region of interest" description="Disordered" evidence="2">
    <location>
        <begin position="94"/>
        <end position="119"/>
    </location>
</feature>
<feature type="compositionally biased region" description="Acidic residues" evidence="2">
    <location>
        <begin position="98"/>
        <end position="111"/>
    </location>
</feature>
<name>VE8E2_BPV1</name>
<organismHost>
    <name type="scientific">Bos taurus</name>
    <name type="common">Bovine</name>
    <dbReference type="NCBI Taxonomy" id="9913"/>
</organismHost>
<protein>
    <recommendedName>
        <fullName>Protein E8^E2C</fullName>
    </recommendedName>
</protein>
<keyword id="KW-1048">Host nucleus</keyword>
<keyword id="KW-1185">Reference proteome</keyword>
<comment type="function">
    <text evidence="1">Plays a role in limiting the replication of viral DNA in keratinocytes. Recruits the host NCoR/SMRT complex to viral replication foci to mediate repression of both viral replication and transcription.</text>
</comment>
<comment type="subcellular location">
    <subcellularLocation>
        <location evidence="1">Host nucleus</location>
    </subcellularLocation>
</comment>
<comment type="similarity">
    <text evidence="3">Belongs to the papillomaviridae E8^E2C protein family.</text>
</comment>
<dbReference type="EMBL" id="X02346">
    <property type="status" value="NOT_ANNOTATED_CDS"/>
    <property type="molecule type" value="Genomic_DNA"/>
</dbReference>
<dbReference type="SMR" id="P0DOD6"/>
<dbReference type="Proteomes" id="UP000006567">
    <property type="component" value="Genome"/>
</dbReference>
<dbReference type="GO" id="GO:0042025">
    <property type="term" value="C:host cell nucleus"/>
    <property type="evidence" value="ECO:0007669"/>
    <property type="project" value="UniProtKB-SubCell"/>
</dbReference>
<dbReference type="GO" id="GO:0003677">
    <property type="term" value="F:DNA binding"/>
    <property type="evidence" value="ECO:0007669"/>
    <property type="project" value="InterPro"/>
</dbReference>
<dbReference type="GO" id="GO:0003700">
    <property type="term" value="F:DNA-binding transcription factor activity"/>
    <property type="evidence" value="ECO:0007669"/>
    <property type="project" value="InterPro"/>
</dbReference>
<dbReference type="GO" id="GO:0006275">
    <property type="term" value="P:regulation of DNA replication"/>
    <property type="evidence" value="ECO:0007669"/>
    <property type="project" value="InterPro"/>
</dbReference>
<dbReference type="FunFam" id="3.30.70.330:FF:001341">
    <property type="entry name" value="Regulatory protein E2"/>
    <property type="match status" value="1"/>
</dbReference>
<dbReference type="Gene3D" id="3.30.70.330">
    <property type="match status" value="1"/>
</dbReference>
<dbReference type="InterPro" id="IPR035975">
    <property type="entry name" value="E2/EBNA1_C_sf"/>
</dbReference>
<dbReference type="InterPro" id="IPR012677">
    <property type="entry name" value="Nucleotide-bd_a/b_plait_sf"/>
</dbReference>
<dbReference type="InterPro" id="IPR000427">
    <property type="entry name" value="Papillomavirus_E2_C"/>
</dbReference>
<dbReference type="Pfam" id="PF00511">
    <property type="entry name" value="PPV_E2_C"/>
    <property type="match status" value="1"/>
</dbReference>
<dbReference type="SUPFAM" id="SSF54957">
    <property type="entry name" value="Viral DNA-binding domain"/>
    <property type="match status" value="1"/>
</dbReference>
<proteinExistence type="inferred from homology"/>